<evidence type="ECO:0000305" key="1"/>
<evidence type="ECO:0007829" key="2">
    <source>
        <dbReference type="PDB" id="5I61"/>
    </source>
</evidence>
<evidence type="ECO:0007829" key="3">
    <source>
        <dbReference type="PDB" id="5I62"/>
    </source>
</evidence>
<name>RDRP_HPBVH</name>
<dbReference type="EC" id="2.7.7.48"/>
<dbReference type="EMBL" id="AB186898">
    <property type="protein sequence ID" value="BAD98236.1"/>
    <property type="molecule type" value="Genomic_RNA"/>
</dbReference>
<dbReference type="RefSeq" id="YP_239361.1">
    <property type="nucleotide sequence ID" value="NC_007027.1"/>
</dbReference>
<dbReference type="PDB" id="5I61">
    <property type="method" value="X-ray"/>
    <property type="resolution" value="2.40 A"/>
    <property type="chains" value="A/B=2-534"/>
</dbReference>
<dbReference type="PDB" id="5I62">
    <property type="method" value="X-ray"/>
    <property type="resolution" value="2.00 A"/>
    <property type="chains" value="A=2-534"/>
</dbReference>
<dbReference type="PDBsum" id="5I61"/>
<dbReference type="PDBsum" id="5I62"/>
<dbReference type="SMR" id="Q50LE4"/>
<dbReference type="KEGG" id="vg:5075908"/>
<dbReference type="Proteomes" id="UP000007252">
    <property type="component" value="Genome"/>
</dbReference>
<dbReference type="GO" id="GO:0044423">
    <property type="term" value="C:virion component"/>
    <property type="evidence" value="ECO:0007669"/>
    <property type="project" value="UniProtKB-KW"/>
</dbReference>
<dbReference type="GO" id="GO:0000166">
    <property type="term" value="F:nucleotide binding"/>
    <property type="evidence" value="ECO:0007669"/>
    <property type="project" value="UniProtKB-KW"/>
</dbReference>
<dbReference type="GO" id="GO:0003723">
    <property type="term" value="F:RNA binding"/>
    <property type="evidence" value="ECO:0007669"/>
    <property type="project" value="UniProtKB-KW"/>
</dbReference>
<dbReference type="GO" id="GO:0003968">
    <property type="term" value="F:RNA-directed RNA polymerase activity"/>
    <property type="evidence" value="ECO:0007669"/>
    <property type="project" value="UniProtKB-KW"/>
</dbReference>
<dbReference type="GO" id="GO:0006351">
    <property type="term" value="P:DNA-templated transcription"/>
    <property type="evidence" value="ECO:0007669"/>
    <property type="project" value="InterPro"/>
</dbReference>
<dbReference type="CDD" id="cd23185">
    <property type="entry name" value="dsRNAv_Picobirnaviridae_RdRp"/>
    <property type="match status" value="1"/>
</dbReference>
<dbReference type="InterPro" id="IPR043502">
    <property type="entry name" value="DNA/RNA_pol_sf"/>
</dbReference>
<dbReference type="InterPro" id="IPR001205">
    <property type="entry name" value="RNA-dir_pol_C"/>
</dbReference>
<dbReference type="Pfam" id="PF00680">
    <property type="entry name" value="RdRP_1"/>
    <property type="match status" value="1"/>
</dbReference>
<dbReference type="SUPFAM" id="SSF56672">
    <property type="entry name" value="DNA/RNA polymerases"/>
    <property type="match status" value="1"/>
</dbReference>
<reference key="1">
    <citation type="journal article" date="2005" name="J. Virol. Methods">
        <title>Complete nucleotide sequences of two RNA segments of human picobirnavirus.</title>
        <authorList>
            <person name="Wakuda M."/>
            <person name="Pongsuwanna Y."/>
            <person name="Taniguchi K."/>
        </authorList>
    </citation>
    <scope>NUCLEOTIDE SEQUENCE [GENOMIC RNA]</scope>
</reference>
<protein>
    <recommendedName>
        <fullName>Potential RNA-dependent RNA polymerase</fullName>
        <ecNumber>2.7.7.48</ecNumber>
    </recommendedName>
</protein>
<keyword id="KW-0002">3D-structure</keyword>
<keyword id="KW-0547">Nucleotide-binding</keyword>
<keyword id="KW-0548">Nucleotidyltransferase</keyword>
<keyword id="KW-1185">Reference proteome</keyword>
<keyword id="KW-0694">RNA-binding</keyword>
<keyword id="KW-0696">RNA-directed RNA polymerase</keyword>
<keyword id="KW-0808">Transferase</keyword>
<keyword id="KW-0693">Viral RNA replication</keyword>
<keyword id="KW-0946">Virion</keyword>
<proteinExistence type="evidence at protein level"/>
<accession>Q50LE4</accession>
<gene>
    <name type="primary">Segment-2</name>
    <name type="ORF">ORF3</name>
</gene>
<feature type="chain" id="PRO_0000379525" description="Potential RNA-dependent RNA polymerase">
    <location>
        <begin position="1"/>
        <end position="534"/>
    </location>
</feature>
<feature type="domain" description="RdRp catalytic">
    <location>
        <begin position="255"/>
        <end position="373"/>
    </location>
</feature>
<feature type="helix" evidence="3">
    <location>
        <begin position="5"/>
        <end position="11"/>
    </location>
</feature>
<feature type="helix" evidence="3">
    <location>
        <begin position="17"/>
        <end position="28"/>
    </location>
</feature>
<feature type="turn" evidence="3">
    <location>
        <begin position="38"/>
        <end position="41"/>
    </location>
</feature>
<feature type="helix" evidence="3">
    <location>
        <begin position="44"/>
        <end position="55"/>
    </location>
</feature>
<feature type="helix" evidence="3">
    <location>
        <begin position="56"/>
        <end position="58"/>
    </location>
</feature>
<feature type="turn" evidence="3">
    <location>
        <begin position="59"/>
        <end position="61"/>
    </location>
</feature>
<feature type="helix" evidence="3">
    <location>
        <begin position="63"/>
        <end position="73"/>
    </location>
</feature>
<feature type="helix" evidence="3">
    <location>
        <begin position="85"/>
        <end position="87"/>
    </location>
</feature>
<feature type="helix" evidence="3">
    <location>
        <begin position="89"/>
        <end position="97"/>
    </location>
</feature>
<feature type="helix" evidence="3">
    <location>
        <begin position="98"/>
        <end position="100"/>
    </location>
</feature>
<feature type="helix" evidence="3">
    <location>
        <begin position="108"/>
        <end position="116"/>
    </location>
</feature>
<feature type="turn" evidence="3">
    <location>
        <begin position="117"/>
        <end position="120"/>
    </location>
</feature>
<feature type="helix" evidence="3">
    <location>
        <begin position="129"/>
        <end position="135"/>
    </location>
</feature>
<feature type="strand" evidence="3">
    <location>
        <begin position="138"/>
        <end position="141"/>
    </location>
</feature>
<feature type="turn" evidence="3">
    <location>
        <begin position="144"/>
        <end position="146"/>
    </location>
</feature>
<feature type="helix" evidence="3">
    <location>
        <begin position="150"/>
        <end position="157"/>
    </location>
</feature>
<feature type="strand" evidence="3">
    <location>
        <begin position="159"/>
        <end position="165"/>
    </location>
</feature>
<feature type="strand" evidence="3">
    <location>
        <begin position="168"/>
        <end position="173"/>
    </location>
</feature>
<feature type="strand" evidence="3">
    <location>
        <begin position="176"/>
        <end position="180"/>
    </location>
</feature>
<feature type="strand" evidence="3">
    <location>
        <begin position="182"/>
        <end position="189"/>
    </location>
</feature>
<feature type="strand" evidence="3">
    <location>
        <begin position="192"/>
        <end position="194"/>
    </location>
</feature>
<feature type="helix" evidence="3">
    <location>
        <begin position="195"/>
        <end position="197"/>
    </location>
</feature>
<feature type="strand" evidence="3">
    <location>
        <begin position="199"/>
        <end position="205"/>
    </location>
</feature>
<feature type="helix" evidence="3">
    <location>
        <begin position="208"/>
        <end position="228"/>
    </location>
</feature>
<feature type="helix" evidence="3">
    <location>
        <begin position="232"/>
        <end position="234"/>
    </location>
</feature>
<feature type="helix" evidence="3">
    <location>
        <begin position="237"/>
        <end position="250"/>
    </location>
</feature>
<feature type="strand" evidence="3">
    <location>
        <begin position="257"/>
        <end position="261"/>
    </location>
</feature>
<feature type="helix" evidence="3">
    <location>
        <begin position="266"/>
        <end position="268"/>
    </location>
</feature>
<feature type="helix" evidence="3">
    <location>
        <begin position="271"/>
        <end position="284"/>
    </location>
</feature>
<feature type="helix" evidence="3">
    <location>
        <begin position="288"/>
        <end position="296"/>
    </location>
</feature>
<feature type="helix" evidence="3">
    <location>
        <begin position="298"/>
        <end position="302"/>
    </location>
</feature>
<feature type="strand" evidence="3">
    <location>
        <begin position="306"/>
        <end position="309"/>
    </location>
</feature>
<feature type="strand" evidence="3">
    <location>
        <begin position="312"/>
        <end position="314"/>
    </location>
</feature>
<feature type="strand" evidence="2">
    <location>
        <begin position="321"/>
        <end position="326"/>
    </location>
</feature>
<feature type="helix" evidence="3">
    <location>
        <begin position="327"/>
        <end position="345"/>
    </location>
</feature>
<feature type="strand" evidence="3">
    <location>
        <begin position="355"/>
        <end position="357"/>
    </location>
</feature>
<feature type="strand" evidence="3">
    <location>
        <begin position="360"/>
        <end position="363"/>
    </location>
</feature>
<feature type="helix" evidence="3">
    <location>
        <begin position="370"/>
        <end position="378"/>
    </location>
</feature>
<feature type="turn" evidence="3">
    <location>
        <begin position="379"/>
        <end position="381"/>
    </location>
</feature>
<feature type="helix" evidence="3">
    <location>
        <begin position="386"/>
        <end position="388"/>
    </location>
</feature>
<feature type="strand" evidence="3">
    <location>
        <begin position="390"/>
        <end position="398"/>
    </location>
</feature>
<feature type="strand" evidence="3">
    <location>
        <begin position="401"/>
        <end position="404"/>
    </location>
</feature>
<feature type="helix" evidence="3">
    <location>
        <begin position="419"/>
        <end position="427"/>
    </location>
</feature>
<feature type="strand" evidence="3">
    <location>
        <begin position="428"/>
        <end position="431"/>
    </location>
</feature>
<feature type="helix" evidence="3">
    <location>
        <begin position="435"/>
        <end position="438"/>
    </location>
</feature>
<feature type="helix" evidence="3">
    <location>
        <begin position="441"/>
        <end position="451"/>
    </location>
</feature>
<feature type="helix" evidence="3">
    <location>
        <begin position="452"/>
        <end position="454"/>
    </location>
</feature>
<feature type="helix" evidence="3">
    <location>
        <begin position="460"/>
        <end position="469"/>
    </location>
</feature>
<feature type="helix" evidence="3">
    <location>
        <begin position="474"/>
        <end position="476"/>
    </location>
</feature>
<feature type="turn" evidence="3">
    <location>
        <begin position="480"/>
        <end position="482"/>
    </location>
</feature>
<feature type="helix" evidence="3">
    <location>
        <begin position="483"/>
        <end position="485"/>
    </location>
</feature>
<feature type="helix" evidence="3">
    <location>
        <begin position="486"/>
        <end position="491"/>
    </location>
</feature>
<feature type="helix" evidence="2">
    <location>
        <begin position="501"/>
        <end position="505"/>
    </location>
</feature>
<feature type="helix" evidence="3">
    <location>
        <begin position="521"/>
        <end position="523"/>
    </location>
</feature>
<feature type="helix" evidence="3">
    <location>
        <begin position="525"/>
        <end position="532"/>
    </location>
</feature>
<comment type="function">
    <text evidence="1">RNA-directed RNA polymerase that is involved in both transcription and genome replication.</text>
</comment>
<comment type="catalytic activity">
    <reaction>
        <text>RNA(n) + a ribonucleoside 5'-triphosphate = RNA(n+1) + diphosphate</text>
        <dbReference type="Rhea" id="RHEA:21248"/>
        <dbReference type="Rhea" id="RHEA-COMP:14527"/>
        <dbReference type="Rhea" id="RHEA-COMP:17342"/>
        <dbReference type="ChEBI" id="CHEBI:33019"/>
        <dbReference type="ChEBI" id="CHEBI:61557"/>
        <dbReference type="ChEBI" id="CHEBI:140395"/>
        <dbReference type="EC" id="2.7.7.48"/>
    </reaction>
</comment>
<comment type="subcellular location">
    <subcellularLocation>
        <location evidence="1">Virion</location>
    </subcellularLocation>
</comment>
<sequence length="534" mass="60975">MQVAPNVWSKYFNIPNPGLRAYFSNVVSGQPEVYRTPFYKGMSLESICDEWYKKLVSIDTQWPTLMEFEDDLRKKVGPMSVMLPLKERMSDIDSYYDSISKDQVPFDTKAISAAKSEWKGVSRLRLRSEVNTVAVMKKSTNSGSPYFSKRKAVVSKTIPCDVYMDGRYCVMRQNGREWSGAAVLGWRGQEGGPKPTDVKQRVVWMFPFAVNIRELQVYQPLILTFQRLGLVPAWVSMEAVDRRITKMFDTKGPRDVVVCTDFSKFDQHFNPTCQSVAKELLADLLTGQEAVDWLERVFPIKYAIPLAYNWGEIRYGIHGMGSGSGGTNADETLVHRVLQHEAAISHHTTLNPNSQCLGDDGVLTYPGISAEDVMQSYSRHGLDMNLEKQYVSKQDCTYLRRWHHTDYRVDGMCVGVYSTMRALGRLAMQERYYDPDVWGEKMVTLRYLSIIENVKYHPLKEEFLDFCIKGDKTRLGLGIPGFLDNIAGEAQKAIDMMPDFLGYTKSLQYDGDLRRNAAAGIENWWVVQALKSRR</sequence>
<organism>
    <name type="scientific">Human picobirnavirus (strain Human/Thailand/Hy005102/-)</name>
    <name type="common">PBV</name>
    <dbReference type="NCBI Taxonomy" id="647332"/>
    <lineage>
        <taxon>Viruses</taxon>
        <taxon>Riboviria</taxon>
        <taxon>Orthornavirae</taxon>
        <taxon>Pisuviricota</taxon>
        <taxon>Duplopiviricetes</taxon>
        <taxon>Durnavirales</taxon>
        <taxon>Picobirnaviridae</taxon>
        <taxon>Orthopicobirnavirus</taxon>
        <taxon>Orthopicobirnavirus hominis</taxon>
    </lineage>
</organism>
<organismHost>
    <name type="scientific">Homo sapiens</name>
    <name type="common">Human</name>
    <dbReference type="NCBI Taxonomy" id="9606"/>
</organismHost>